<evidence type="ECO:0000255" key="1">
    <source>
        <dbReference type="HAMAP-Rule" id="MF_00283"/>
    </source>
</evidence>
<organism>
    <name type="scientific">Staphylococcus aureus (strain bovine RF122 / ET3-1)</name>
    <dbReference type="NCBI Taxonomy" id="273036"/>
    <lineage>
        <taxon>Bacteria</taxon>
        <taxon>Bacillati</taxon>
        <taxon>Bacillota</taxon>
        <taxon>Bacilli</taxon>
        <taxon>Bacillales</taxon>
        <taxon>Staphylococcaceae</taxon>
        <taxon>Staphylococcus</taxon>
    </lineage>
</organism>
<sequence length="800" mass="88907">MLISNEWLKEYVTIDDSVSNLAERITRTGIEVDDLIDYTKDIKNLVVGFVKSKEKHPDADKLNVCQVDIGEDEPVQIVCGAPNVDAGQYVIVAKVGGRLPGGIKIKRAKLRGERSEGMICSLQEIGISSNYIPKSFESGIYVFSESQVPGTDALQALYLDDQVMEFDLTPNRADALSMIGTAYEVAALYNTKMTKPETTSNELELSANDELTVTIENEDKVPYYSARVVHNVTIEPSPIWMQARLIKAGIRPINNVVDISNYVLLEYGQPLHMFDQDAIGSQQIVVRQANEGEKMTTLDDTERELLTSDIVITNGQTPIALAGVMGGDFSEVKEHTSNIVIEGAIFDSVSIRHTSRRLNLRSESSSRFEKGIATEFVDEAVDRACYLLQTYANGKVLKDRVSSGELGAFITPIDITADKINRTIGFDLSQNDIVTIFNQLGFDTEINDDVITVQVPSRRKDITIKEDLIEEVARIYGYDDIPSTLPVFEKVTSGQLTDRQYKTRMVKEVLEGAGLDQAITYSLVSKEDATAFAMQQRQTIDLLMPMSEAHASLRQSLLPHLIEAASYNVARKNKDVKLFEIGNVFFANGEGELPDQVEYLSGILTGDYVVNQWQGKKETVDFYLAKGVVDRVSEKLNLEFSYRRADIDGLHPGRTAEILLENKVVGFIGELHPTLAADNDLKRTYVFELNFDALMAVSVGYINYQPIPIFPGMSRDIALEVDQNIPAADLLSTIHAHGGNILKDTLVFDVYQGEHLEKGKKSIAIRLNYLDTEETLTDERVSKVQAEIEAALIEQGAVIR</sequence>
<gene>
    <name evidence="1" type="primary">pheT</name>
    <name type="ordered locus">SAB1003</name>
</gene>
<dbReference type="EC" id="6.1.1.20" evidence="1"/>
<dbReference type="EMBL" id="AJ938182">
    <property type="protein sequence ID" value="CAI80691.1"/>
    <property type="molecule type" value="Genomic_DNA"/>
</dbReference>
<dbReference type="RefSeq" id="WP_000908996.1">
    <property type="nucleotide sequence ID" value="NC_007622.1"/>
</dbReference>
<dbReference type="SMR" id="Q2YX86"/>
<dbReference type="KEGG" id="sab:SAB1003"/>
<dbReference type="HOGENOM" id="CLU_016891_0_0_9"/>
<dbReference type="GO" id="GO:0009328">
    <property type="term" value="C:phenylalanine-tRNA ligase complex"/>
    <property type="evidence" value="ECO:0007669"/>
    <property type="project" value="TreeGrafter"/>
</dbReference>
<dbReference type="GO" id="GO:0005524">
    <property type="term" value="F:ATP binding"/>
    <property type="evidence" value="ECO:0007669"/>
    <property type="project" value="UniProtKB-UniRule"/>
</dbReference>
<dbReference type="GO" id="GO:0140096">
    <property type="term" value="F:catalytic activity, acting on a protein"/>
    <property type="evidence" value="ECO:0007669"/>
    <property type="project" value="UniProtKB-ARBA"/>
</dbReference>
<dbReference type="GO" id="GO:0000287">
    <property type="term" value="F:magnesium ion binding"/>
    <property type="evidence" value="ECO:0007669"/>
    <property type="project" value="UniProtKB-UniRule"/>
</dbReference>
<dbReference type="GO" id="GO:0004826">
    <property type="term" value="F:phenylalanine-tRNA ligase activity"/>
    <property type="evidence" value="ECO:0007669"/>
    <property type="project" value="UniProtKB-UniRule"/>
</dbReference>
<dbReference type="GO" id="GO:0016740">
    <property type="term" value="F:transferase activity"/>
    <property type="evidence" value="ECO:0007669"/>
    <property type="project" value="UniProtKB-ARBA"/>
</dbReference>
<dbReference type="GO" id="GO:0000049">
    <property type="term" value="F:tRNA binding"/>
    <property type="evidence" value="ECO:0007669"/>
    <property type="project" value="UniProtKB-KW"/>
</dbReference>
<dbReference type="GO" id="GO:0006432">
    <property type="term" value="P:phenylalanyl-tRNA aminoacylation"/>
    <property type="evidence" value="ECO:0007669"/>
    <property type="project" value="UniProtKB-UniRule"/>
</dbReference>
<dbReference type="CDD" id="cd00769">
    <property type="entry name" value="PheRS_beta_core"/>
    <property type="match status" value="1"/>
</dbReference>
<dbReference type="CDD" id="cd02796">
    <property type="entry name" value="tRNA_bind_bactPheRS"/>
    <property type="match status" value="1"/>
</dbReference>
<dbReference type="FunFam" id="2.40.50.140:FF:000045">
    <property type="entry name" value="Phenylalanine--tRNA ligase beta subunit"/>
    <property type="match status" value="1"/>
</dbReference>
<dbReference type="FunFam" id="3.30.56.10:FF:000002">
    <property type="entry name" value="Phenylalanine--tRNA ligase beta subunit"/>
    <property type="match status" value="1"/>
</dbReference>
<dbReference type="FunFam" id="3.30.70.380:FF:000001">
    <property type="entry name" value="Phenylalanine--tRNA ligase beta subunit"/>
    <property type="match status" value="1"/>
</dbReference>
<dbReference type="FunFam" id="3.30.930.10:FF:000022">
    <property type="entry name" value="Phenylalanine--tRNA ligase beta subunit"/>
    <property type="match status" value="1"/>
</dbReference>
<dbReference type="FunFam" id="3.50.40.10:FF:000001">
    <property type="entry name" value="Phenylalanine--tRNA ligase beta subunit"/>
    <property type="match status" value="1"/>
</dbReference>
<dbReference type="Gene3D" id="3.30.56.10">
    <property type="match status" value="2"/>
</dbReference>
<dbReference type="Gene3D" id="3.30.930.10">
    <property type="entry name" value="Bira Bifunctional Protein, Domain 2"/>
    <property type="match status" value="1"/>
</dbReference>
<dbReference type="Gene3D" id="3.30.70.380">
    <property type="entry name" value="Ferrodoxin-fold anticodon-binding domain"/>
    <property type="match status" value="1"/>
</dbReference>
<dbReference type="Gene3D" id="2.40.50.140">
    <property type="entry name" value="Nucleic acid-binding proteins"/>
    <property type="match status" value="1"/>
</dbReference>
<dbReference type="Gene3D" id="3.50.40.10">
    <property type="entry name" value="Phenylalanyl-trna Synthetase, Chain B, domain 3"/>
    <property type="match status" value="1"/>
</dbReference>
<dbReference type="HAMAP" id="MF_00283">
    <property type="entry name" value="Phe_tRNA_synth_beta1"/>
    <property type="match status" value="1"/>
</dbReference>
<dbReference type="InterPro" id="IPR045864">
    <property type="entry name" value="aa-tRNA-synth_II/BPL/LPL"/>
</dbReference>
<dbReference type="InterPro" id="IPR005146">
    <property type="entry name" value="B3/B4_tRNA-bd"/>
</dbReference>
<dbReference type="InterPro" id="IPR009061">
    <property type="entry name" value="DNA-bd_dom_put_sf"/>
</dbReference>
<dbReference type="InterPro" id="IPR005121">
    <property type="entry name" value="Fdx_antiC-bd"/>
</dbReference>
<dbReference type="InterPro" id="IPR036690">
    <property type="entry name" value="Fdx_antiC-bd_sf"/>
</dbReference>
<dbReference type="InterPro" id="IPR012340">
    <property type="entry name" value="NA-bd_OB-fold"/>
</dbReference>
<dbReference type="InterPro" id="IPR045060">
    <property type="entry name" value="Phe-tRNA-ligase_IIc_bsu"/>
</dbReference>
<dbReference type="InterPro" id="IPR004532">
    <property type="entry name" value="Phe-tRNA-ligase_IIc_bsu_bact"/>
</dbReference>
<dbReference type="InterPro" id="IPR020825">
    <property type="entry name" value="Phe-tRNA_synthase-like_B3/B4"/>
</dbReference>
<dbReference type="InterPro" id="IPR041616">
    <property type="entry name" value="PheRS_beta_core"/>
</dbReference>
<dbReference type="InterPro" id="IPR002547">
    <property type="entry name" value="tRNA-bd_dom"/>
</dbReference>
<dbReference type="InterPro" id="IPR033714">
    <property type="entry name" value="tRNA_bind_bactPheRS"/>
</dbReference>
<dbReference type="InterPro" id="IPR005147">
    <property type="entry name" value="tRNA_synthase_B5-dom"/>
</dbReference>
<dbReference type="NCBIfam" id="TIGR00472">
    <property type="entry name" value="pheT_bact"/>
    <property type="match status" value="1"/>
</dbReference>
<dbReference type="NCBIfam" id="NF045760">
    <property type="entry name" value="YtpR"/>
    <property type="match status" value="1"/>
</dbReference>
<dbReference type="PANTHER" id="PTHR10947:SF0">
    <property type="entry name" value="PHENYLALANINE--TRNA LIGASE BETA SUBUNIT"/>
    <property type="match status" value="1"/>
</dbReference>
<dbReference type="PANTHER" id="PTHR10947">
    <property type="entry name" value="PHENYLALANYL-TRNA SYNTHETASE BETA CHAIN AND LEUCINE-RICH REPEAT-CONTAINING PROTEIN 47"/>
    <property type="match status" value="1"/>
</dbReference>
<dbReference type="Pfam" id="PF03483">
    <property type="entry name" value="B3_4"/>
    <property type="match status" value="1"/>
</dbReference>
<dbReference type="Pfam" id="PF03484">
    <property type="entry name" value="B5"/>
    <property type="match status" value="1"/>
</dbReference>
<dbReference type="Pfam" id="PF03147">
    <property type="entry name" value="FDX-ACB"/>
    <property type="match status" value="1"/>
</dbReference>
<dbReference type="Pfam" id="PF01588">
    <property type="entry name" value="tRNA_bind"/>
    <property type="match status" value="1"/>
</dbReference>
<dbReference type="Pfam" id="PF17759">
    <property type="entry name" value="tRNA_synthFbeta"/>
    <property type="match status" value="1"/>
</dbReference>
<dbReference type="SMART" id="SM00873">
    <property type="entry name" value="B3_4"/>
    <property type="match status" value="1"/>
</dbReference>
<dbReference type="SMART" id="SM00874">
    <property type="entry name" value="B5"/>
    <property type="match status" value="1"/>
</dbReference>
<dbReference type="SMART" id="SM00896">
    <property type="entry name" value="FDX-ACB"/>
    <property type="match status" value="1"/>
</dbReference>
<dbReference type="SUPFAM" id="SSF54991">
    <property type="entry name" value="Anticodon-binding domain of PheRS"/>
    <property type="match status" value="1"/>
</dbReference>
<dbReference type="SUPFAM" id="SSF55681">
    <property type="entry name" value="Class II aaRS and biotin synthetases"/>
    <property type="match status" value="1"/>
</dbReference>
<dbReference type="SUPFAM" id="SSF50249">
    <property type="entry name" value="Nucleic acid-binding proteins"/>
    <property type="match status" value="1"/>
</dbReference>
<dbReference type="SUPFAM" id="SSF56037">
    <property type="entry name" value="PheT/TilS domain"/>
    <property type="match status" value="1"/>
</dbReference>
<dbReference type="SUPFAM" id="SSF46955">
    <property type="entry name" value="Putative DNA-binding domain"/>
    <property type="match status" value="1"/>
</dbReference>
<dbReference type="PROSITE" id="PS51483">
    <property type="entry name" value="B5"/>
    <property type="match status" value="1"/>
</dbReference>
<dbReference type="PROSITE" id="PS51447">
    <property type="entry name" value="FDX_ACB"/>
    <property type="match status" value="1"/>
</dbReference>
<dbReference type="PROSITE" id="PS50886">
    <property type="entry name" value="TRBD"/>
    <property type="match status" value="1"/>
</dbReference>
<name>SYFB_STAAB</name>
<comment type="catalytic activity">
    <reaction evidence="1">
        <text>tRNA(Phe) + L-phenylalanine + ATP = L-phenylalanyl-tRNA(Phe) + AMP + diphosphate + H(+)</text>
        <dbReference type="Rhea" id="RHEA:19413"/>
        <dbReference type="Rhea" id="RHEA-COMP:9668"/>
        <dbReference type="Rhea" id="RHEA-COMP:9699"/>
        <dbReference type="ChEBI" id="CHEBI:15378"/>
        <dbReference type="ChEBI" id="CHEBI:30616"/>
        <dbReference type="ChEBI" id="CHEBI:33019"/>
        <dbReference type="ChEBI" id="CHEBI:58095"/>
        <dbReference type="ChEBI" id="CHEBI:78442"/>
        <dbReference type="ChEBI" id="CHEBI:78531"/>
        <dbReference type="ChEBI" id="CHEBI:456215"/>
        <dbReference type="EC" id="6.1.1.20"/>
    </reaction>
</comment>
<comment type="cofactor">
    <cofactor evidence="1">
        <name>Mg(2+)</name>
        <dbReference type="ChEBI" id="CHEBI:18420"/>
    </cofactor>
    <text evidence="1">Binds 2 magnesium ions per tetramer.</text>
</comment>
<comment type="subunit">
    <text evidence="1">Tetramer of two alpha and two beta subunits.</text>
</comment>
<comment type="subcellular location">
    <subcellularLocation>
        <location>Cytoplasm</location>
    </subcellularLocation>
</comment>
<comment type="similarity">
    <text evidence="1">Belongs to the phenylalanyl-tRNA synthetase beta subunit family. Type 1 subfamily.</text>
</comment>
<accession>Q2YX86</accession>
<proteinExistence type="inferred from homology"/>
<reference key="1">
    <citation type="journal article" date="2007" name="PLoS ONE">
        <title>Molecular correlates of host specialization in Staphylococcus aureus.</title>
        <authorList>
            <person name="Herron-Olson L."/>
            <person name="Fitzgerald J.R."/>
            <person name="Musser J.M."/>
            <person name="Kapur V."/>
        </authorList>
    </citation>
    <scope>NUCLEOTIDE SEQUENCE [LARGE SCALE GENOMIC DNA]</scope>
    <source>
        <strain>bovine RF122 / ET3-1</strain>
    </source>
</reference>
<keyword id="KW-0030">Aminoacyl-tRNA synthetase</keyword>
<keyword id="KW-0067">ATP-binding</keyword>
<keyword id="KW-0963">Cytoplasm</keyword>
<keyword id="KW-0436">Ligase</keyword>
<keyword id="KW-0460">Magnesium</keyword>
<keyword id="KW-0479">Metal-binding</keyword>
<keyword id="KW-0547">Nucleotide-binding</keyword>
<keyword id="KW-0648">Protein biosynthesis</keyword>
<keyword id="KW-0694">RNA-binding</keyword>
<keyword id="KW-0820">tRNA-binding</keyword>
<feature type="chain" id="PRO_0000232089" description="Phenylalanine--tRNA ligase beta subunit">
    <location>
        <begin position="1"/>
        <end position="800"/>
    </location>
</feature>
<feature type="domain" description="tRNA-binding" evidence="1">
    <location>
        <begin position="39"/>
        <end position="154"/>
    </location>
</feature>
<feature type="domain" description="B5" evidence="1">
    <location>
        <begin position="408"/>
        <end position="483"/>
    </location>
</feature>
<feature type="domain" description="FDX-ACB" evidence="1">
    <location>
        <begin position="708"/>
        <end position="800"/>
    </location>
</feature>
<feature type="binding site" evidence="1">
    <location>
        <position position="461"/>
    </location>
    <ligand>
        <name>Mg(2+)</name>
        <dbReference type="ChEBI" id="CHEBI:18420"/>
        <note>shared with alpha subunit</note>
    </ligand>
</feature>
<feature type="binding site" evidence="1">
    <location>
        <position position="467"/>
    </location>
    <ligand>
        <name>Mg(2+)</name>
        <dbReference type="ChEBI" id="CHEBI:18420"/>
        <note>shared with alpha subunit</note>
    </ligand>
</feature>
<feature type="binding site" evidence="1">
    <location>
        <position position="470"/>
    </location>
    <ligand>
        <name>Mg(2+)</name>
        <dbReference type="ChEBI" id="CHEBI:18420"/>
        <note>shared with alpha subunit</note>
    </ligand>
</feature>
<feature type="binding site" evidence="1">
    <location>
        <position position="471"/>
    </location>
    <ligand>
        <name>Mg(2+)</name>
        <dbReference type="ChEBI" id="CHEBI:18420"/>
        <note>shared with alpha subunit</note>
    </ligand>
</feature>
<protein>
    <recommendedName>
        <fullName evidence="1">Phenylalanine--tRNA ligase beta subunit</fullName>
        <ecNumber evidence="1">6.1.1.20</ecNumber>
    </recommendedName>
    <alternativeName>
        <fullName evidence="1">Phenylalanyl-tRNA synthetase beta subunit</fullName>
        <shortName evidence="1">PheRS</shortName>
    </alternativeName>
</protein>